<proteinExistence type="inferred from homology"/>
<evidence type="ECO:0000250" key="1"/>
<evidence type="ECO:0000250" key="2">
    <source>
        <dbReference type="UniProtKB" id="E2R4X3"/>
    </source>
</evidence>
<evidence type="ECO:0000250" key="3">
    <source>
        <dbReference type="UniProtKB" id="P61803"/>
    </source>
</evidence>
<evidence type="ECO:0000255" key="4"/>
<evidence type="ECO:0000305" key="5"/>
<feature type="chain" id="PRO_0000124016" description="Dolichyl-diphosphooligosaccharide--protein glycosyltransferase subunit dad1">
    <location>
        <begin position="1"/>
        <end position="113"/>
    </location>
</feature>
<feature type="topological domain" description="Cytoplasmic" evidence="4">
    <location>
        <begin position="1"/>
        <end position="30"/>
    </location>
</feature>
<feature type="transmembrane region" description="Helical" evidence="4">
    <location>
        <begin position="31"/>
        <end position="51"/>
    </location>
</feature>
<feature type="topological domain" description="Lumenal" evidence="4">
    <location>
        <position position="52"/>
    </location>
</feature>
<feature type="transmembrane region" description="Helical" evidence="4">
    <location>
        <begin position="53"/>
        <end position="73"/>
    </location>
</feature>
<feature type="topological domain" description="Cytoplasmic" evidence="4">
    <location>
        <begin position="74"/>
        <end position="92"/>
    </location>
</feature>
<feature type="transmembrane region" description="Helical" evidence="4">
    <location>
        <begin position="93"/>
        <end position="113"/>
    </location>
</feature>
<keyword id="KW-0053">Apoptosis</keyword>
<keyword id="KW-0256">Endoplasmic reticulum</keyword>
<keyword id="KW-0472">Membrane</keyword>
<keyword id="KW-1185">Reference proteome</keyword>
<keyword id="KW-0812">Transmembrane</keyword>
<keyword id="KW-1133">Transmembrane helix</keyword>
<accession>P46967</accession>
<accession>Q66KN9</accession>
<sequence length="113" mass="12596">MSVSVFSVVSRFLDEYVSSTPQRLKLLDAYLLYILLTGALQFLYCLLVGTFPFNSFLSGFISSVGSFILAVCLRIQINPQNKSDFQGISPERAFADFLFANTILHLVVVNFIG</sequence>
<reference key="1">
    <citation type="journal article" date="1993" name="Mol. Cell. Biol.">
        <title>Molecular cloning of a human cDNA encoding a novel protein, DAD1, whose defect causes apoptotic cell death in hamster BHK21 cells.</title>
        <authorList>
            <person name="Nakashima T."/>
            <person name="Sekiguchi T."/>
            <person name="Kuraoka A."/>
            <person name="Fukushima K."/>
            <person name="Shibata Y."/>
            <person name="Komiyama S."/>
            <person name="Nishimoto T."/>
        </authorList>
    </citation>
    <scope>NUCLEOTIDE SEQUENCE [MRNA]</scope>
</reference>
<reference key="2">
    <citation type="submission" date="2004-07" db="EMBL/GenBank/DDBJ databases">
        <authorList>
            <consortium name="NIH - Xenopus Gene Collection (XGC) project"/>
        </authorList>
    </citation>
    <scope>NUCLEOTIDE SEQUENCE [LARGE SCALE MRNA]</scope>
</reference>
<organism>
    <name type="scientific">Xenopus laevis</name>
    <name type="common">African clawed frog</name>
    <dbReference type="NCBI Taxonomy" id="8355"/>
    <lineage>
        <taxon>Eukaryota</taxon>
        <taxon>Metazoa</taxon>
        <taxon>Chordata</taxon>
        <taxon>Craniata</taxon>
        <taxon>Vertebrata</taxon>
        <taxon>Euteleostomi</taxon>
        <taxon>Amphibia</taxon>
        <taxon>Batrachia</taxon>
        <taxon>Anura</taxon>
        <taxon>Pipoidea</taxon>
        <taxon>Pipidae</taxon>
        <taxon>Xenopodinae</taxon>
        <taxon>Xenopus</taxon>
        <taxon>Xenopus</taxon>
    </lineage>
</organism>
<comment type="function">
    <text evidence="2 3">Subunit of the oligosaccharyl transferase (OST) complex that catalyzes the initial transfer of a defined glycan (Glc(3)Man(9)GlcNAc(2) in eukaryotes) from the lipid carrier dolichol-pyrophosphate to an asparagine residue within an Asn-X-Ser/Thr consensus motif in nascent polypeptide chains, the first step in protein N-glycosylation (By similarity). N-glycosylation occurs cotranslationally and the complex associates with the Sec61 complex at the channel-forming translocon complex that mediates protein translocation across the endoplasmic reticulum (ER). All subunits are required for a maximal enzyme activity.</text>
</comment>
<comment type="pathway">
    <text evidence="3">Protein modification; protein glycosylation.</text>
</comment>
<comment type="subunit">
    <text evidence="2">Component of the oligosaccharyltransferase (OST) complex.</text>
</comment>
<comment type="subcellular location">
    <subcellularLocation>
        <location evidence="1">Endoplasmic reticulum membrane</location>
        <topology evidence="1">Multi-pass membrane protein</topology>
    </subcellularLocation>
</comment>
<comment type="similarity">
    <text evidence="5">Belongs to the DAD/OST2 family.</text>
</comment>
<protein>
    <recommendedName>
        <fullName evidence="3">Dolichyl-diphosphooligosaccharide--protein glycosyltransferase subunit dad1</fullName>
        <shortName>Oligosaccharyl transferase subunit dad1</shortName>
    </recommendedName>
    <alternativeName>
        <fullName>Defender against cell death 1</fullName>
        <shortName>DAD-1</shortName>
    </alternativeName>
</protein>
<dbReference type="EMBL" id="D15059">
    <property type="protein sequence ID" value="BAA03652.1"/>
    <property type="molecule type" value="mRNA"/>
</dbReference>
<dbReference type="EMBL" id="BC078613">
    <property type="protein sequence ID" value="AAH78613.1"/>
    <property type="molecule type" value="mRNA"/>
</dbReference>
<dbReference type="PIR" id="B54437">
    <property type="entry name" value="B54437"/>
</dbReference>
<dbReference type="RefSeq" id="NP_001081227.1">
    <property type="nucleotide sequence ID" value="NM_001087758.2"/>
</dbReference>
<dbReference type="RefSeq" id="XP_018097873.1">
    <property type="nucleotide sequence ID" value="XM_018242384.1"/>
</dbReference>
<dbReference type="SMR" id="P46967"/>
<dbReference type="DNASU" id="397721"/>
<dbReference type="GeneID" id="397721"/>
<dbReference type="KEGG" id="xla:397721"/>
<dbReference type="AGR" id="Xenbase:XB-GENE-922833"/>
<dbReference type="CTD" id="397721"/>
<dbReference type="Xenbase" id="XB-GENE-922833">
    <property type="gene designation" value="dad1.S"/>
</dbReference>
<dbReference type="OrthoDB" id="445566at2759"/>
<dbReference type="UniPathway" id="UPA00378"/>
<dbReference type="Proteomes" id="UP000186698">
    <property type="component" value="Chromosome 1S"/>
</dbReference>
<dbReference type="Bgee" id="397721">
    <property type="expression patterns" value="Expressed in testis and 19 other cell types or tissues"/>
</dbReference>
<dbReference type="GO" id="GO:0008250">
    <property type="term" value="C:oligosaccharyltransferase complex"/>
    <property type="evidence" value="ECO:0000250"/>
    <property type="project" value="UniProtKB"/>
</dbReference>
<dbReference type="GO" id="GO:0006915">
    <property type="term" value="P:apoptotic process"/>
    <property type="evidence" value="ECO:0007669"/>
    <property type="project" value="UniProtKB-KW"/>
</dbReference>
<dbReference type="GO" id="GO:0006486">
    <property type="term" value="P:protein glycosylation"/>
    <property type="evidence" value="ECO:0000250"/>
    <property type="project" value="UniProtKB"/>
</dbReference>
<dbReference type="GO" id="GO:0006487">
    <property type="term" value="P:protein N-linked glycosylation"/>
    <property type="evidence" value="ECO:0000318"/>
    <property type="project" value="GO_Central"/>
</dbReference>
<dbReference type="InterPro" id="IPR003038">
    <property type="entry name" value="DAD/Ost2"/>
</dbReference>
<dbReference type="PANTHER" id="PTHR10705">
    <property type="entry name" value="DOLICHYL-DIPHOSPHOOLIGOSACCHARIDE--PROTEIN GLYCOSYLTRANSFERASE SUBUNIT DAD1"/>
    <property type="match status" value="1"/>
</dbReference>
<dbReference type="PANTHER" id="PTHR10705:SF0">
    <property type="entry name" value="DOLICHYL-DIPHOSPHOOLIGOSACCHARIDE--PROTEIN GLYCOSYLTRANSFERASE SUBUNIT DAD1"/>
    <property type="match status" value="1"/>
</dbReference>
<dbReference type="Pfam" id="PF02109">
    <property type="entry name" value="DAD"/>
    <property type="match status" value="1"/>
</dbReference>
<dbReference type="PIRSF" id="PIRSF005588">
    <property type="entry name" value="DAD"/>
    <property type="match status" value="1"/>
</dbReference>
<name>DAD1_XENLA</name>
<gene>
    <name evidence="3" type="primary">dad1</name>
</gene>